<keyword id="KW-0878">Amphibian defense peptide</keyword>
<keyword id="KW-0044">Antibiotic</keyword>
<keyword id="KW-0929">Antimicrobial</keyword>
<keyword id="KW-0903">Direct protein sequencing</keyword>
<keyword id="KW-1015">Disulfide bond</keyword>
<keyword id="KW-0391">Immunity</keyword>
<keyword id="KW-0399">Innate immunity</keyword>
<keyword id="KW-0472">Membrane</keyword>
<keyword id="KW-0964">Secreted</keyword>
<keyword id="KW-1052">Target cell membrane</keyword>
<keyword id="KW-1053">Target membrane</keyword>
<sequence length="24" mass="2559">FLPILAGLAAKIVPKLFCLATKKC</sequence>
<reference key="1">
    <citation type="journal article" date="2007" name="Peptides">
        <title>Peptide defenses of the Cascades frog Rana cascadae: implications for the evolutionary history of frogs of the Amerana species group.</title>
        <authorList>
            <person name="Conlon J.M."/>
            <person name="Al-Dhaheri A."/>
            <person name="Al-Mutawa E."/>
            <person name="Al-Kharrge R."/>
            <person name="Ahmed E."/>
            <person name="Kolodziejek J."/>
            <person name="Nowotny N."/>
            <person name="Nielsen P.F."/>
            <person name="Davidson C."/>
        </authorList>
    </citation>
    <scope>PROTEIN SEQUENCE</scope>
    <scope>SUBCELLULAR LOCATION</scope>
    <scope>FUNCTION</scope>
    <scope>MASS SPECTROMETRY</scope>
    <source>
        <tissue>Skin secretion</tissue>
    </source>
</reference>
<evidence type="ECO:0000269" key="1">
    <source>
    </source>
</evidence>
<evidence type="ECO:0000303" key="2">
    <source>
    </source>
</evidence>
<evidence type="ECO:0000305" key="3"/>
<evidence type="ECO:0000305" key="4">
    <source>
    </source>
</evidence>
<feature type="peptide" id="PRO_0000457124" description="Brevinin-1CSa" evidence="1">
    <location>
        <begin position="1"/>
        <end position="24"/>
    </location>
</feature>
<feature type="disulfide bond" evidence="3">
    <location>
        <begin position="18"/>
        <end position="24"/>
    </location>
</feature>
<proteinExistence type="evidence at protein level"/>
<protein>
    <recommendedName>
        <fullName evidence="2">Brevinin-1CSa</fullName>
    </recommendedName>
</protein>
<comment type="function">
    <text evidence="1">Antibacterial peptide. Has activity against the Gram-positive bacterium S.aureus (MIC=2 uM) and the Gram-negative bacterium E.coli (MIC=32 uM). Has a strong hemolytic activity (LC(50)=5 uM).</text>
</comment>
<comment type="subcellular location">
    <subcellularLocation>
        <location evidence="1">Secreted</location>
    </subcellularLocation>
    <subcellularLocation>
        <location evidence="3">Target cell membrane</location>
    </subcellularLocation>
</comment>
<comment type="tissue specificity">
    <text evidence="4">Expressed by the skin glands.</text>
</comment>
<comment type="mass spectrometry" mass="2555.8" method="MALDI" evidence="1"/>
<comment type="similarity">
    <text evidence="3">Belongs to the frog skin active peptide (FSAP) family. Brevinin subfamily.</text>
</comment>
<accession>P0DTL9</accession>
<name>BR1A_RANCS</name>
<organism>
    <name type="scientific">Rana cascadae</name>
    <name type="common">Cascades frog</name>
    <dbReference type="NCBI Taxonomy" id="160497"/>
    <lineage>
        <taxon>Eukaryota</taxon>
        <taxon>Metazoa</taxon>
        <taxon>Chordata</taxon>
        <taxon>Craniata</taxon>
        <taxon>Vertebrata</taxon>
        <taxon>Euteleostomi</taxon>
        <taxon>Amphibia</taxon>
        <taxon>Batrachia</taxon>
        <taxon>Anura</taxon>
        <taxon>Neobatrachia</taxon>
        <taxon>Ranoidea</taxon>
        <taxon>Ranidae</taxon>
        <taxon>Rana</taxon>
        <taxon>Rana</taxon>
    </lineage>
</organism>
<dbReference type="GO" id="GO:0005576">
    <property type="term" value="C:extracellular region"/>
    <property type="evidence" value="ECO:0007669"/>
    <property type="project" value="UniProtKB-SubCell"/>
</dbReference>
<dbReference type="GO" id="GO:0016020">
    <property type="term" value="C:membrane"/>
    <property type="evidence" value="ECO:0007669"/>
    <property type="project" value="UniProtKB-KW"/>
</dbReference>
<dbReference type="GO" id="GO:0044218">
    <property type="term" value="C:other organism cell membrane"/>
    <property type="evidence" value="ECO:0007669"/>
    <property type="project" value="UniProtKB-KW"/>
</dbReference>
<dbReference type="GO" id="GO:0042742">
    <property type="term" value="P:defense response to bacterium"/>
    <property type="evidence" value="ECO:0007669"/>
    <property type="project" value="UniProtKB-KW"/>
</dbReference>
<dbReference type="GO" id="GO:0045087">
    <property type="term" value="P:innate immune response"/>
    <property type="evidence" value="ECO:0007669"/>
    <property type="project" value="UniProtKB-KW"/>
</dbReference>
<dbReference type="InterPro" id="IPR012520">
    <property type="entry name" value="Antimicrobial_frog_1"/>
</dbReference>
<dbReference type="Pfam" id="PF08018">
    <property type="entry name" value="Antimicrobial_1"/>
    <property type="match status" value="1"/>
</dbReference>